<proteinExistence type="inferred from homology"/>
<gene>
    <name evidence="1" type="primary">panB</name>
    <name type="ordered locus">SNSL254_A0199</name>
</gene>
<dbReference type="EC" id="2.1.2.11" evidence="1"/>
<dbReference type="EMBL" id="CP001113">
    <property type="protein sequence ID" value="ACF61163.1"/>
    <property type="molecule type" value="Genomic_DNA"/>
</dbReference>
<dbReference type="RefSeq" id="WP_000805487.1">
    <property type="nucleotide sequence ID" value="NZ_CCMR01000003.1"/>
</dbReference>
<dbReference type="SMR" id="B4SUA8"/>
<dbReference type="KEGG" id="see:SNSL254_A0199"/>
<dbReference type="HOGENOM" id="CLU_036645_1_0_6"/>
<dbReference type="UniPathway" id="UPA00028">
    <property type="reaction ID" value="UER00003"/>
</dbReference>
<dbReference type="Proteomes" id="UP000008824">
    <property type="component" value="Chromosome"/>
</dbReference>
<dbReference type="GO" id="GO:0005737">
    <property type="term" value="C:cytoplasm"/>
    <property type="evidence" value="ECO:0007669"/>
    <property type="project" value="UniProtKB-SubCell"/>
</dbReference>
<dbReference type="GO" id="GO:0003864">
    <property type="term" value="F:3-methyl-2-oxobutanoate hydroxymethyltransferase activity"/>
    <property type="evidence" value="ECO:0007669"/>
    <property type="project" value="UniProtKB-UniRule"/>
</dbReference>
<dbReference type="GO" id="GO:0000287">
    <property type="term" value="F:magnesium ion binding"/>
    <property type="evidence" value="ECO:0007669"/>
    <property type="project" value="TreeGrafter"/>
</dbReference>
<dbReference type="GO" id="GO:0015940">
    <property type="term" value="P:pantothenate biosynthetic process"/>
    <property type="evidence" value="ECO:0007669"/>
    <property type="project" value="UniProtKB-UniRule"/>
</dbReference>
<dbReference type="CDD" id="cd06557">
    <property type="entry name" value="KPHMT-like"/>
    <property type="match status" value="1"/>
</dbReference>
<dbReference type="FunFam" id="3.20.20.60:FF:000003">
    <property type="entry name" value="3-methyl-2-oxobutanoate hydroxymethyltransferase"/>
    <property type="match status" value="1"/>
</dbReference>
<dbReference type="Gene3D" id="3.20.20.60">
    <property type="entry name" value="Phosphoenolpyruvate-binding domains"/>
    <property type="match status" value="1"/>
</dbReference>
<dbReference type="HAMAP" id="MF_00156">
    <property type="entry name" value="PanB"/>
    <property type="match status" value="1"/>
</dbReference>
<dbReference type="InterPro" id="IPR003700">
    <property type="entry name" value="Pantoate_hydroxy_MeTrfase"/>
</dbReference>
<dbReference type="InterPro" id="IPR015813">
    <property type="entry name" value="Pyrv/PenolPyrv_kinase-like_dom"/>
</dbReference>
<dbReference type="InterPro" id="IPR040442">
    <property type="entry name" value="Pyrv_kinase-like_dom_sf"/>
</dbReference>
<dbReference type="NCBIfam" id="TIGR00222">
    <property type="entry name" value="panB"/>
    <property type="match status" value="1"/>
</dbReference>
<dbReference type="NCBIfam" id="NF001452">
    <property type="entry name" value="PRK00311.1"/>
    <property type="match status" value="1"/>
</dbReference>
<dbReference type="PANTHER" id="PTHR20881">
    <property type="entry name" value="3-METHYL-2-OXOBUTANOATE HYDROXYMETHYLTRANSFERASE"/>
    <property type="match status" value="1"/>
</dbReference>
<dbReference type="PANTHER" id="PTHR20881:SF0">
    <property type="entry name" value="3-METHYL-2-OXOBUTANOATE HYDROXYMETHYLTRANSFERASE"/>
    <property type="match status" value="1"/>
</dbReference>
<dbReference type="Pfam" id="PF02548">
    <property type="entry name" value="Pantoate_transf"/>
    <property type="match status" value="1"/>
</dbReference>
<dbReference type="PIRSF" id="PIRSF000388">
    <property type="entry name" value="Pantoate_hydroxy_MeTrfase"/>
    <property type="match status" value="1"/>
</dbReference>
<dbReference type="SUPFAM" id="SSF51621">
    <property type="entry name" value="Phosphoenolpyruvate/pyruvate domain"/>
    <property type="match status" value="1"/>
</dbReference>
<keyword id="KW-0963">Cytoplasm</keyword>
<keyword id="KW-0460">Magnesium</keyword>
<keyword id="KW-0479">Metal-binding</keyword>
<keyword id="KW-0566">Pantothenate biosynthesis</keyword>
<keyword id="KW-0808">Transferase</keyword>
<reference key="1">
    <citation type="journal article" date="2011" name="J. Bacteriol.">
        <title>Comparative genomics of 28 Salmonella enterica isolates: evidence for CRISPR-mediated adaptive sublineage evolution.</title>
        <authorList>
            <person name="Fricke W.F."/>
            <person name="Mammel M.K."/>
            <person name="McDermott P.F."/>
            <person name="Tartera C."/>
            <person name="White D.G."/>
            <person name="Leclerc J.E."/>
            <person name="Ravel J."/>
            <person name="Cebula T.A."/>
        </authorList>
    </citation>
    <scope>NUCLEOTIDE SEQUENCE [LARGE SCALE GENOMIC DNA]</scope>
    <source>
        <strain>SL254</strain>
    </source>
</reference>
<feature type="chain" id="PRO_1000097005" description="3-methyl-2-oxobutanoate hydroxymethyltransferase">
    <location>
        <begin position="1"/>
        <end position="263"/>
    </location>
</feature>
<feature type="active site" description="Proton acceptor" evidence="1">
    <location>
        <position position="180"/>
    </location>
</feature>
<feature type="binding site" evidence="1">
    <location>
        <begin position="45"/>
        <end position="46"/>
    </location>
    <ligand>
        <name>3-methyl-2-oxobutanoate</name>
        <dbReference type="ChEBI" id="CHEBI:11851"/>
    </ligand>
</feature>
<feature type="binding site" evidence="1">
    <location>
        <position position="45"/>
    </location>
    <ligand>
        <name>Mg(2+)</name>
        <dbReference type="ChEBI" id="CHEBI:18420"/>
    </ligand>
</feature>
<feature type="binding site" evidence="1">
    <location>
        <position position="84"/>
    </location>
    <ligand>
        <name>3-methyl-2-oxobutanoate</name>
        <dbReference type="ChEBI" id="CHEBI:11851"/>
    </ligand>
</feature>
<feature type="binding site" evidence="1">
    <location>
        <position position="84"/>
    </location>
    <ligand>
        <name>Mg(2+)</name>
        <dbReference type="ChEBI" id="CHEBI:18420"/>
    </ligand>
</feature>
<feature type="binding site" evidence="1">
    <location>
        <position position="112"/>
    </location>
    <ligand>
        <name>3-methyl-2-oxobutanoate</name>
        <dbReference type="ChEBI" id="CHEBI:11851"/>
    </ligand>
</feature>
<feature type="binding site" evidence="1">
    <location>
        <position position="114"/>
    </location>
    <ligand>
        <name>Mg(2+)</name>
        <dbReference type="ChEBI" id="CHEBI:18420"/>
    </ligand>
</feature>
<protein>
    <recommendedName>
        <fullName evidence="1">3-methyl-2-oxobutanoate hydroxymethyltransferase</fullName>
        <ecNumber evidence="1">2.1.2.11</ecNumber>
    </recommendedName>
    <alternativeName>
        <fullName evidence="1">Ketopantoate hydroxymethyltransferase</fullName>
        <shortName evidence="1">KPHMT</shortName>
    </alternativeName>
</protein>
<comment type="function">
    <text evidence="1">Catalyzes the reversible reaction in which hydroxymethyl group from 5,10-methylenetetrahydrofolate is transferred onto alpha-ketoisovalerate to form ketopantoate.</text>
</comment>
<comment type="catalytic activity">
    <reaction evidence="1">
        <text>3-methyl-2-oxobutanoate + (6R)-5,10-methylene-5,6,7,8-tetrahydrofolate + H2O = 2-dehydropantoate + (6S)-5,6,7,8-tetrahydrofolate</text>
        <dbReference type="Rhea" id="RHEA:11824"/>
        <dbReference type="ChEBI" id="CHEBI:11561"/>
        <dbReference type="ChEBI" id="CHEBI:11851"/>
        <dbReference type="ChEBI" id="CHEBI:15377"/>
        <dbReference type="ChEBI" id="CHEBI:15636"/>
        <dbReference type="ChEBI" id="CHEBI:57453"/>
        <dbReference type="EC" id="2.1.2.11"/>
    </reaction>
</comment>
<comment type="cofactor">
    <cofactor evidence="1">
        <name>Mg(2+)</name>
        <dbReference type="ChEBI" id="CHEBI:18420"/>
    </cofactor>
    <text evidence="1">Binds 1 Mg(2+) ion per subunit.</text>
</comment>
<comment type="pathway">
    <text evidence="1">Cofactor biosynthesis; (R)-pantothenate biosynthesis; (R)-pantoate from 3-methyl-2-oxobutanoate: step 1/2.</text>
</comment>
<comment type="subunit">
    <text evidence="1">Homodecamer; pentamer of dimers.</text>
</comment>
<comment type="subcellular location">
    <subcellularLocation>
        <location evidence="1">Cytoplasm</location>
    </subcellularLocation>
</comment>
<comment type="similarity">
    <text evidence="1">Belongs to the PanB family.</text>
</comment>
<accession>B4SUA8</accession>
<sequence>MKPTTISLLQKCKQEKKRFATITAYDYSFAKLFADEGINVMLVGDSLGMTIQGHDSTLPVTVEDIAYHTRAVRRGAPNCLLLSDLPFMAYATPEQACENAAIVMRAGANMVKIEGGAWLVDTVKMLTERAVPVCGHLGLTPQSVNIFGGYKIQGRGDAGQVLLDDALALEAAGAQLLVLECVPVELAKRVTEALSIPVIGIGAGNVTDGQILVMHDAFGITGGHIPKFAKNFLAEAGDMRAAVQQYMAEVESGVYPGEEHSFH</sequence>
<organism>
    <name type="scientific">Salmonella newport (strain SL254)</name>
    <dbReference type="NCBI Taxonomy" id="423368"/>
    <lineage>
        <taxon>Bacteria</taxon>
        <taxon>Pseudomonadati</taxon>
        <taxon>Pseudomonadota</taxon>
        <taxon>Gammaproteobacteria</taxon>
        <taxon>Enterobacterales</taxon>
        <taxon>Enterobacteriaceae</taxon>
        <taxon>Salmonella</taxon>
    </lineage>
</organism>
<name>PANB_SALNS</name>
<evidence type="ECO:0000255" key="1">
    <source>
        <dbReference type="HAMAP-Rule" id="MF_00156"/>
    </source>
</evidence>